<sequence>MSEFLPFSRPAMGVEELAAVKEVLESGWITTGPKNQALEQAFCQLTGNQHAIAVSSATAGMHITLMALKIGKGDEVITPSLTWVSTLNMISLLGATPVMVDVDRDTLMVTPEAIESAITPRTKAIIPVHYAGAPADIDAIRAIGERYGIAVIEDAAHAVGTYYKGRHIGAKGTAIFSFHAIKNITCAEGGLIVTDNENLARQLRMLKFHGLGVDAYDRQTWGRAPQAEVLTPGYKYNLTDINAAIALTQLVKLEHLNTRRREIAQQYQQALAALPFQPLSLPAWPHVHAWHLFIIRVDEQRCGISRDALMEALKERGIGTGLHFRAAHTQKYYRERFPTLSLPNTEWNSERICSLPLFPDMTTADADHVITALQQLAGQ</sequence>
<keyword id="KW-0032">Aminotransferase</keyword>
<keyword id="KW-0046">Antibiotic resistance</keyword>
<keyword id="KW-0441">Lipid A biosynthesis</keyword>
<keyword id="KW-0444">Lipid biosynthesis</keyword>
<keyword id="KW-0443">Lipid metabolism</keyword>
<keyword id="KW-0448">Lipopolysaccharide biosynthesis</keyword>
<keyword id="KW-0663">Pyridoxal phosphate</keyword>
<keyword id="KW-0808">Transferase</keyword>
<protein>
    <recommendedName>
        <fullName evidence="1">UDP-4-amino-4-deoxy-L-arabinose--oxoglutarate aminotransferase</fullName>
        <ecNumber evidence="1">2.6.1.87</ecNumber>
    </recommendedName>
    <alternativeName>
        <fullName evidence="1">UDP-(beta-L-threo-pentapyranosyl-4''-ulose diphosphate) aminotransferase</fullName>
        <shortName evidence="1">UDP-Ara4O aminotransferase</shortName>
    </alternativeName>
    <alternativeName>
        <fullName evidence="1">UDP-4-amino-4-deoxy-L-arabinose aminotransferase</fullName>
    </alternativeName>
</protein>
<feature type="chain" id="PRO_1000213732" description="UDP-4-amino-4-deoxy-L-arabinose--oxoglutarate aminotransferase">
    <location>
        <begin position="1"/>
        <end position="379"/>
    </location>
</feature>
<feature type="modified residue" description="N6-(pyridoxal phosphate)lysine" evidence="1">
    <location>
        <position position="182"/>
    </location>
</feature>
<organism>
    <name type="scientific">Escherichia coli (strain K12 / MC4100 / BW2952)</name>
    <dbReference type="NCBI Taxonomy" id="595496"/>
    <lineage>
        <taxon>Bacteria</taxon>
        <taxon>Pseudomonadati</taxon>
        <taxon>Pseudomonadota</taxon>
        <taxon>Gammaproteobacteria</taxon>
        <taxon>Enterobacterales</taxon>
        <taxon>Enterobacteriaceae</taxon>
        <taxon>Escherichia</taxon>
    </lineage>
</organism>
<comment type="function">
    <text evidence="1">Catalyzes the conversion of UDP-4-keto-arabinose (UDP-Ara4O) to UDP-4-amino-4-deoxy-L-arabinose (UDP-L-Ara4N). The modified arabinose is attached to lipid A and is required for resistance to polymyxin and cationic antimicrobial peptides.</text>
</comment>
<comment type="catalytic activity">
    <reaction evidence="1">
        <text>UDP-4-amino-4-deoxy-beta-L-arabinose + 2-oxoglutarate = UDP-beta-L-threo-pentopyranos-4-ulose + L-glutamate</text>
        <dbReference type="Rhea" id="RHEA:24710"/>
        <dbReference type="ChEBI" id="CHEBI:16810"/>
        <dbReference type="ChEBI" id="CHEBI:29985"/>
        <dbReference type="ChEBI" id="CHEBI:58708"/>
        <dbReference type="ChEBI" id="CHEBI:58710"/>
        <dbReference type="EC" id="2.6.1.87"/>
    </reaction>
</comment>
<comment type="cofactor">
    <cofactor evidence="1">
        <name>pyridoxal 5'-phosphate</name>
        <dbReference type="ChEBI" id="CHEBI:597326"/>
    </cofactor>
</comment>
<comment type="pathway">
    <text evidence="1">Nucleotide-sugar biosynthesis; UDP-4-deoxy-4-formamido-beta-L-arabinose biosynthesis; UDP-4-deoxy-4-formamido-beta-L-arabinose from UDP-alpha-D-glucuronate: step 2/3.</text>
</comment>
<comment type="pathway">
    <text evidence="1">Bacterial outer membrane biogenesis; lipopolysaccharide biosynthesis.</text>
</comment>
<comment type="subunit">
    <text evidence="1">Homodimer.</text>
</comment>
<comment type="similarity">
    <text evidence="1">Belongs to the DegT/DnrJ/EryC1 family. ArnB subfamily.</text>
</comment>
<accession>C4ZU95</accession>
<reference key="1">
    <citation type="journal article" date="2009" name="J. Bacteriol.">
        <title>Genomic sequencing reveals regulatory mutations and recombinational events in the widely used MC4100 lineage of Escherichia coli K-12.</title>
        <authorList>
            <person name="Ferenci T."/>
            <person name="Zhou Z."/>
            <person name="Betteridge T."/>
            <person name="Ren Y."/>
            <person name="Liu Y."/>
            <person name="Feng L."/>
            <person name="Reeves P.R."/>
            <person name="Wang L."/>
        </authorList>
    </citation>
    <scope>NUCLEOTIDE SEQUENCE [LARGE SCALE GENOMIC DNA]</scope>
    <source>
        <strain>K12 / MC4100 / BW2952</strain>
    </source>
</reference>
<dbReference type="EC" id="2.6.1.87" evidence="1"/>
<dbReference type="EMBL" id="CP001396">
    <property type="protein sequence ID" value="ACR65768.1"/>
    <property type="molecule type" value="Genomic_DNA"/>
</dbReference>
<dbReference type="RefSeq" id="WP_001295286.1">
    <property type="nucleotide sequence ID" value="NC_012759.1"/>
</dbReference>
<dbReference type="SMR" id="C4ZU95"/>
<dbReference type="KEGG" id="ebw:BWG_2026"/>
<dbReference type="HOGENOM" id="CLU_033332_0_3_6"/>
<dbReference type="UniPathway" id="UPA00030"/>
<dbReference type="UniPathway" id="UPA00032">
    <property type="reaction ID" value="UER00493"/>
</dbReference>
<dbReference type="GO" id="GO:0016020">
    <property type="term" value="C:membrane"/>
    <property type="evidence" value="ECO:0007669"/>
    <property type="project" value="GOC"/>
</dbReference>
<dbReference type="GO" id="GO:0030170">
    <property type="term" value="F:pyridoxal phosphate binding"/>
    <property type="evidence" value="ECO:0007669"/>
    <property type="project" value="TreeGrafter"/>
</dbReference>
<dbReference type="GO" id="GO:0099620">
    <property type="term" value="F:UDP-4-amino-4-deoxy-L-arabinose aminotransferase"/>
    <property type="evidence" value="ECO:0007669"/>
    <property type="project" value="UniProtKB-EC"/>
</dbReference>
<dbReference type="GO" id="GO:0009245">
    <property type="term" value="P:lipid A biosynthetic process"/>
    <property type="evidence" value="ECO:0007669"/>
    <property type="project" value="UniProtKB-KW"/>
</dbReference>
<dbReference type="GO" id="GO:0009103">
    <property type="term" value="P:lipopolysaccharide biosynthetic process"/>
    <property type="evidence" value="ECO:0007669"/>
    <property type="project" value="UniProtKB-UniRule"/>
</dbReference>
<dbReference type="GO" id="GO:0046677">
    <property type="term" value="P:response to antibiotic"/>
    <property type="evidence" value="ECO:0007669"/>
    <property type="project" value="UniProtKB-KW"/>
</dbReference>
<dbReference type="CDD" id="cd00616">
    <property type="entry name" value="AHBA_syn"/>
    <property type="match status" value="1"/>
</dbReference>
<dbReference type="FunFam" id="3.40.640.10:FF:000040">
    <property type="entry name" value="UDP-4-amino-4-deoxy-L-arabinose--oxoglutarate aminotransferase"/>
    <property type="match status" value="1"/>
</dbReference>
<dbReference type="FunFam" id="3.90.1150.10:FF:000030">
    <property type="entry name" value="UDP-4-amino-4-deoxy-L-arabinose--oxoglutarate aminotransferase"/>
    <property type="match status" value="1"/>
</dbReference>
<dbReference type="Gene3D" id="3.90.1150.10">
    <property type="entry name" value="Aspartate Aminotransferase, domain 1"/>
    <property type="match status" value="1"/>
</dbReference>
<dbReference type="Gene3D" id="3.40.640.10">
    <property type="entry name" value="Type I PLP-dependent aspartate aminotransferase-like (Major domain)"/>
    <property type="match status" value="1"/>
</dbReference>
<dbReference type="HAMAP" id="MF_01167">
    <property type="entry name" value="ArnB_transfer"/>
    <property type="match status" value="1"/>
</dbReference>
<dbReference type="InterPro" id="IPR022850">
    <property type="entry name" value="ArnB_NH2Trfase"/>
</dbReference>
<dbReference type="InterPro" id="IPR000653">
    <property type="entry name" value="DegT/StrS_aminotransferase"/>
</dbReference>
<dbReference type="InterPro" id="IPR015424">
    <property type="entry name" value="PyrdxlP-dep_Trfase"/>
</dbReference>
<dbReference type="InterPro" id="IPR015421">
    <property type="entry name" value="PyrdxlP-dep_Trfase_major"/>
</dbReference>
<dbReference type="InterPro" id="IPR015422">
    <property type="entry name" value="PyrdxlP-dep_Trfase_small"/>
</dbReference>
<dbReference type="NCBIfam" id="NF008658">
    <property type="entry name" value="PRK11658.1"/>
    <property type="match status" value="1"/>
</dbReference>
<dbReference type="PANTHER" id="PTHR30244">
    <property type="entry name" value="TRANSAMINASE"/>
    <property type="match status" value="1"/>
</dbReference>
<dbReference type="PANTHER" id="PTHR30244:SF41">
    <property type="entry name" value="UDP-4-AMINO-4-DEOXY-L-ARABINOSE--OXOGLUTARATE AMINOTRANSFERASE"/>
    <property type="match status" value="1"/>
</dbReference>
<dbReference type="Pfam" id="PF01041">
    <property type="entry name" value="DegT_DnrJ_EryC1"/>
    <property type="match status" value="1"/>
</dbReference>
<dbReference type="PIRSF" id="PIRSF000390">
    <property type="entry name" value="PLP_StrS"/>
    <property type="match status" value="1"/>
</dbReference>
<dbReference type="SUPFAM" id="SSF53383">
    <property type="entry name" value="PLP-dependent transferases"/>
    <property type="match status" value="1"/>
</dbReference>
<evidence type="ECO:0000255" key="1">
    <source>
        <dbReference type="HAMAP-Rule" id="MF_01167"/>
    </source>
</evidence>
<gene>
    <name evidence="1" type="primary">arnB</name>
    <name type="ordered locus">BWG_2026</name>
</gene>
<name>ARNB_ECOBW</name>
<proteinExistence type="inferred from homology"/>